<reference key="1">
    <citation type="submission" date="2003-05" db="EMBL/GenBank/DDBJ databases">
        <title>Cloning of human full-length CDSs in BD Creator(TM) system donor vector.</title>
        <authorList>
            <person name="Kalnine N."/>
            <person name="Chen X."/>
            <person name="Rolfs A."/>
            <person name="Halleck A."/>
            <person name="Hines L."/>
            <person name="Eisenstein S."/>
            <person name="Koundinya M."/>
            <person name="Raphael J."/>
            <person name="Moreira D."/>
            <person name="Kelley T."/>
            <person name="LaBaer J."/>
            <person name="Lin Y."/>
            <person name="Phelan M."/>
            <person name="Farmer A."/>
        </authorList>
    </citation>
    <scope>NUCLEOTIDE SEQUENCE [LARGE SCALE MRNA]</scope>
</reference>
<reference key="2">
    <citation type="journal article" date="2004" name="Nature">
        <title>The DNA sequence and biology of human chromosome 19.</title>
        <authorList>
            <person name="Grimwood J."/>
            <person name="Gordon L.A."/>
            <person name="Olsen A.S."/>
            <person name="Terry A."/>
            <person name="Schmutz J."/>
            <person name="Lamerdin J.E."/>
            <person name="Hellsten U."/>
            <person name="Goodstein D."/>
            <person name="Couronne O."/>
            <person name="Tran-Gyamfi M."/>
            <person name="Aerts A."/>
            <person name="Altherr M."/>
            <person name="Ashworth L."/>
            <person name="Bajorek E."/>
            <person name="Black S."/>
            <person name="Branscomb E."/>
            <person name="Caenepeel S."/>
            <person name="Carrano A.V."/>
            <person name="Caoile C."/>
            <person name="Chan Y.M."/>
            <person name="Christensen M."/>
            <person name="Cleland C.A."/>
            <person name="Copeland A."/>
            <person name="Dalin E."/>
            <person name="Dehal P."/>
            <person name="Denys M."/>
            <person name="Detter J.C."/>
            <person name="Escobar J."/>
            <person name="Flowers D."/>
            <person name="Fotopulos D."/>
            <person name="Garcia C."/>
            <person name="Georgescu A.M."/>
            <person name="Glavina T."/>
            <person name="Gomez M."/>
            <person name="Gonzales E."/>
            <person name="Groza M."/>
            <person name="Hammon N."/>
            <person name="Hawkins T."/>
            <person name="Haydu L."/>
            <person name="Ho I."/>
            <person name="Huang W."/>
            <person name="Israni S."/>
            <person name="Jett J."/>
            <person name="Kadner K."/>
            <person name="Kimball H."/>
            <person name="Kobayashi A."/>
            <person name="Larionov V."/>
            <person name="Leem S.-H."/>
            <person name="Lopez F."/>
            <person name="Lou Y."/>
            <person name="Lowry S."/>
            <person name="Malfatti S."/>
            <person name="Martinez D."/>
            <person name="McCready P.M."/>
            <person name="Medina C."/>
            <person name="Morgan J."/>
            <person name="Nelson K."/>
            <person name="Nolan M."/>
            <person name="Ovcharenko I."/>
            <person name="Pitluck S."/>
            <person name="Pollard M."/>
            <person name="Popkie A.P."/>
            <person name="Predki P."/>
            <person name="Quan G."/>
            <person name="Ramirez L."/>
            <person name="Rash S."/>
            <person name="Retterer J."/>
            <person name="Rodriguez A."/>
            <person name="Rogers S."/>
            <person name="Salamov A."/>
            <person name="Salazar A."/>
            <person name="She X."/>
            <person name="Smith D."/>
            <person name="Slezak T."/>
            <person name="Solovyev V."/>
            <person name="Thayer N."/>
            <person name="Tice H."/>
            <person name="Tsai M."/>
            <person name="Ustaszewska A."/>
            <person name="Vo N."/>
            <person name="Wagner M."/>
            <person name="Wheeler J."/>
            <person name="Wu K."/>
            <person name="Xie G."/>
            <person name="Yang J."/>
            <person name="Dubchak I."/>
            <person name="Furey T.S."/>
            <person name="DeJong P."/>
            <person name="Dickson M."/>
            <person name="Gordon D."/>
            <person name="Eichler E.E."/>
            <person name="Pennacchio L.A."/>
            <person name="Richardson P."/>
            <person name="Stubbs L."/>
            <person name="Rokhsar D.S."/>
            <person name="Myers R.M."/>
            <person name="Rubin E.M."/>
            <person name="Lucas S.M."/>
        </authorList>
    </citation>
    <scope>NUCLEOTIDE SEQUENCE [LARGE SCALE GENOMIC DNA]</scope>
</reference>
<reference key="3">
    <citation type="journal article" date="2004" name="Genome Res.">
        <title>The status, quality, and expansion of the NIH full-length cDNA project: the Mammalian Gene Collection (MGC).</title>
        <authorList>
            <consortium name="The MGC Project Team"/>
        </authorList>
    </citation>
    <scope>NUCLEOTIDE SEQUENCE [LARGE SCALE MRNA]</scope>
    <source>
        <tissue>Muscle</tissue>
    </source>
</reference>
<reference key="4">
    <citation type="submission" date="2008-12" db="UniProtKB">
        <authorList>
            <person name="Lubec G."/>
            <person name="Chen W.-Q."/>
            <person name="Sun Y."/>
        </authorList>
    </citation>
    <scope>PROTEIN SEQUENCE OF 94-104; 131-150; 152-161; 192-202; 236-244; 294-306; 345-372; 486-496 AND 530-555</scope>
    <scope>IDENTIFICATION BY MASS SPECTROMETRY</scope>
    <source>
        <tissue>Fetal brain cortex</tissue>
    </source>
</reference>
<reference key="5">
    <citation type="journal article" date="1992" name="Mol. Cell. Biol.">
        <title>The gene for a novel human lamin maps at a highly transcribed locus of chromosome 19 which replicates at the onset of S-phase.</title>
        <authorList>
            <person name="Biamonti G."/>
            <person name="Giacca M."/>
            <person name="Perini G."/>
            <person name="Contreas G."/>
            <person name="Zentilin L."/>
            <person name="Weighardt F."/>
            <person name="Guerra M."/>
            <person name="Valle G.D."/>
            <person name="Saccone S."/>
            <person name="Riva S."/>
            <person name="Falaschi A."/>
        </authorList>
    </citation>
    <scope>NUCLEOTIDE SEQUENCE [MRNA] OF 105-620</scope>
    <scope>NUCLEOTIDE SEQUENCE [GENOMIC DNA] OF 531-620</scope>
</reference>
<reference key="6">
    <citation type="journal article" date="2006" name="Cell">
        <title>Global, in vivo, and site-specific phosphorylation dynamics in signaling networks.</title>
        <authorList>
            <person name="Olsen J.V."/>
            <person name="Blagoev B."/>
            <person name="Gnad F."/>
            <person name="Macek B."/>
            <person name="Kumar C."/>
            <person name="Mortensen P."/>
            <person name="Mann M."/>
        </authorList>
    </citation>
    <scope>PHOSPHORYLATION [LARGE SCALE ANALYSIS] AT THR-34</scope>
    <scope>IDENTIFICATION BY MASS SPECTROMETRY [LARGE SCALE ANALYSIS]</scope>
    <source>
        <tissue>Cervix carcinoma</tissue>
    </source>
</reference>
<reference key="7">
    <citation type="journal article" date="2008" name="J. Proteome Res.">
        <title>Combining protein-based IMAC, peptide-based IMAC, and MudPIT for efficient phosphoproteomic analysis.</title>
        <authorList>
            <person name="Cantin G.T."/>
            <person name="Yi W."/>
            <person name="Lu B."/>
            <person name="Park S.K."/>
            <person name="Xu T."/>
            <person name="Lee J.-D."/>
            <person name="Yates J.R. III"/>
        </authorList>
    </citation>
    <scope>IDENTIFICATION BY MASS SPECTROMETRY [LARGE SCALE ANALYSIS]</scope>
    <source>
        <tissue>Cervix carcinoma</tissue>
    </source>
</reference>
<reference key="8">
    <citation type="journal article" date="2008" name="J. Proteome Res.">
        <title>Phosphorylation analysis of primary human T lymphocytes using sequential IMAC and titanium oxide enrichment.</title>
        <authorList>
            <person name="Carrascal M."/>
            <person name="Ovelleiro D."/>
            <person name="Casas V."/>
            <person name="Gay M."/>
            <person name="Abian J."/>
        </authorList>
    </citation>
    <scope>IDENTIFICATION BY MASS SPECTROMETRY [LARGE SCALE ANALYSIS]</scope>
    <source>
        <tissue>T-cell</tissue>
    </source>
</reference>
<reference key="9">
    <citation type="journal article" date="2008" name="Mol. Cell">
        <title>Kinase-selective enrichment enables quantitative phosphoproteomics of the kinome across the cell cycle.</title>
        <authorList>
            <person name="Daub H."/>
            <person name="Olsen J.V."/>
            <person name="Bairlein M."/>
            <person name="Gnad F."/>
            <person name="Oppermann F.S."/>
            <person name="Korner R."/>
            <person name="Greff Z."/>
            <person name="Keri G."/>
            <person name="Stemmann O."/>
            <person name="Mann M."/>
        </authorList>
    </citation>
    <scope>IDENTIFICATION BY MASS SPECTROMETRY [LARGE SCALE ANALYSIS]</scope>
    <source>
        <tissue>Cervix carcinoma</tissue>
    </source>
</reference>
<reference key="10">
    <citation type="journal article" date="2008" name="Proc. Natl. Acad. Sci. U.S.A.">
        <title>A quantitative atlas of mitotic phosphorylation.</title>
        <authorList>
            <person name="Dephoure N."/>
            <person name="Zhou C."/>
            <person name="Villen J."/>
            <person name="Beausoleil S.A."/>
            <person name="Bakalarski C.E."/>
            <person name="Elledge S.J."/>
            <person name="Gygi S.P."/>
        </authorList>
    </citation>
    <scope>PHOSPHORYLATION [LARGE SCALE ANALYSIS] AT THR-34; SER-37; SER-422; SER-424 AND SER-426</scope>
    <scope>IDENTIFICATION BY MASS SPECTROMETRY [LARGE SCALE ANALYSIS]</scope>
    <source>
        <tissue>Cervix carcinoma</tissue>
    </source>
</reference>
<reference key="11">
    <citation type="journal article" date="2009" name="Anal. Chem.">
        <title>Lys-N and trypsin cover complementary parts of the phosphoproteome in a refined SCX-based approach.</title>
        <authorList>
            <person name="Gauci S."/>
            <person name="Helbig A.O."/>
            <person name="Slijper M."/>
            <person name="Krijgsveld J."/>
            <person name="Heck A.J."/>
            <person name="Mohammed S."/>
        </authorList>
    </citation>
    <scope>IDENTIFICATION BY MASS SPECTROMETRY [LARGE SCALE ANALYSIS]</scope>
</reference>
<reference key="12">
    <citation type="journal article" date="2009" name="Sci. Signal.">
        <title>Quantitative phosphoproteomic analysis of T cell receptor signaling reveals system-wide modulation of protein-protein interactions.</title>
        <authorList>
            <person name="Mayya V."/>
            <person name="Lundgren D.H."/>
            <person name="Hwang S.-I."/>
            <person name="Rezaul K."/>
            <person name="Wu L."/>
            <person name="Eng J.K."/>
            <person name="Rodionov V."/>
            <person name="Han D.K."/>
        </authorList>
    </citation>
    <scope>PHOSPHORYLATION [LARGE SCALE ANALYSIS] AT THR-34</scope>
    <scope>IDENTIFICATION BY MASS SPECTROMETRY [LARGE SCALE ANALYSIS]</scope>
    <source>
        <tissue>Leukemic T-cell</tissue>
    </source>
</reference>
<reference key="13">
    <citation type="journal article" date="2009" name="Science">
        <title>Lysine acetylation targets protein complexes and co-regulates major cellular functions.</title>
        <authorList>
            <person name="Choudhary C."/>
            <person name="Kumar C."/>
            <person name="Gnad F."/>
            <person name="Nielsen M.L."/>
            <person name="Rehman M."/>
            <person name="Walther T.C."/>
            <person name="Olsen J.V."/>
            <person name="Mann M."/>
        </authorList>
    </citation>
    <scope>ACETYLATION [LARGE SCALE ANALYSIS] AT LYS-81</scope>
    <scope>IDENTIFICATION BY MASS SPECTROMETRY [LARGE SCALE ANALYSIS]</scope>
</reference>
<reference key="14">
    <citation type="journal article" date="2010" name="Sci. Signal.">
        <title>Quantitative phosphoproteomics reveals widespread full phosphorylation site occupancy during mitosis.</title>
        <authorList>
            <person name="Olsen J.V."/>
            <person name="Vermeulen M."/>
            <person name="Santamaria A."/>
            <person name="Kumar C."/>
            <person name="Miller M.L."/>
            <person name="Jensen L.J."/>
            <person name="Gnad F."/>
            <person name="Cox J."/>
            <person name="Jensen T.S."/>
            <person name="Nigg E.A."/>
            <person name="Brunak S."/>
            <person name="Mann M."/>
        </authorList>
    </citation>
    <scope>PHOSPHORYLATION [LARGE SCALE ANALYSIS] AT THR-34</scope>
    <scope>IDENTIFICATION BY MASS SPECTROMETRY [LARGE SCALE ANALYSIS]</scope>
    <source>
        <tissue>Cervix carcinoma</tissue>
    </source>
</reference>
<reference key="15">
    <citation type="journal article" date="2011" name="BMC Syst. Biol.">
        <title>Initial characterization of the human central proteome.</title>
        <authorList>
            <person name="Burkard T.R."/>
            <person name="Planyavsky M."/>
            <person name="Kaupe I."/>
            <person name="Breitwieser F.P."/>
            <person name="Buerckstuemmer T."/>
            <person name="Bennett K.L."/>
            <person name="Superti-Furga G."/>
            <person name="Colinge J."/>
        </authorList>
    </citation>
    <scope>IDENTIFICATION BY MASS SPECTROMETRY [LARGE SCALE ANALYSIS]</scope>
</reference>
<reference key="16">
    <citation type="journal article" date="2011" name="Sci. Signal.">
        <title>System-wide temporal characterization of the proteome and phosphoproteome of human embryonic stem cell differentiation.</title>
        <authorList>
            <person name="Rigbolt K.T."/>
            <person name="Prokhorova T.A."/>
            <person name="Akimov V."/>
            <person name="Henningsen J."/>
            <person name="Johansen P.T."/>
            <person name="Kratchmarova I."/>
            <person name="Kassem M."/>
            <person name="Mann M."/>
            <person name="Olsen J.V."/>
            <person name="Blagoev B."/>
        </authorList>
    </citation>
    <scope>PHOSPHORYLATION [LARGE SCALE ANALYSIS] AT SER-420; SER-422; SER-424 AND SER-426</scope>
    <scope>IDENTIFICATION BY MASS SPECTROMETRY [LARGE SCALE ANALYSIS]</scope>
</reference>
<reference key="17">
    <citation type="journal article" date="2013" name="J. Proteome Res.">
        <title>Toward a comprehensive characterization of a human cancer cell phosphoproteome.</title>
        <authorList>
            <person name="Zhou H."/>
            <person name="Di Palma S."/>
            <person name="Preisinger C."/>
            <person name="Peng M."/>
            <person name="Polat A.N."/>
            <person name="Heck A.J."/>
            <person name="Mohammed S."/>
        </authorList>
    </citation>
    <scope>PHOSPHORYLATION [LARGE SCALE ANALYSIS] AT THR-23; THR-34; SER-37; SER-316 AND SER-497</scope>
    <scope>IDENTIFICATION BY MASS SPECTROMETRY [LARGE SCALE ANALYSIS]</scope>
    <source>
        <tissue>Cervix carcinoma</tissue>
        <tissue>Erythroleukemia</tissue>
    </source>
</reference>
<reference key="18">
    <citation type="journal article" date="2014" name="J. Proteomics">
        <title>An enzyme assisted RP-RPLC approach for in-depth analysis of human liver phosphoproteome.</title>
        <authorList>
            <person name="Bian Y."/>
            <person name="Song C."/>
            <person name="Cheng K."/>
            <person name="Dong M."/>
            <person name="Wang F."/>
            <person name="Huang J."/>
            <person name="Sun D."/>
            <person name="Wang L."/>
            <person name="Ye M."/>
            <person name="Zou H."/>
        </authorList>
    </citation>
    <scope>PHOSPHORYLATION [LARGE SCALE ANALYSIS] AT THR-34</scope>
    <scope>IDENTIFICATION BY MASS SPECTROMETRY [LARGE SCALE ANALYSIS]</scope>
    <source>
        <tissue>Liver</tissue>
    </source>
</reference>
<reference key="19">
    <citation type="journal article" date="2015" name="Mol. Cell. Proteomics">
        <title>System-wide analysis of SUMOylation dynamics in response to replication stress reveals novel small ubiquitin-like modified target proteins and acceptor lysines relevant for genome stability.</title>
        <authorList>
            <person name="Xiao Z."/>
            <person name="Chang J.G."/>
            <person name="Hendriks I.A."/>
            <person name="Sigurdsson J.O."/>
            <person name="Olsen J.V."/>
            <person name="Vertegaal A.C."/>
        </authorList>
    </citation>
    <scope>SUMOYLATION [LARGE SCALE ANALYSIS] AT LYS-77; LYS-81 AND LYS-195</scope>
    <scope>IDENTIFICATION BY MASS SPECTROMETRY [LARGE SCALE ANALYSIS]</scope>
</reference>
<reference key="20">
    <citation type="journal article" date="2015" name="Proteomics">
        <title>N-terminome analysis of the human mitochondrial proteome.</title>
        <authorList>
            <person name="Vaca Jacome A.S."/>
            <person name="Rabilloud T."/>
            <person name="Schaeffer-Reiss C."/>
            <person name="Rompais M."/>
            <person name="Ayoub D."/>
            <person name="Lane L."/>
            <person name="Bairoch A."/>
            <person name="Van Dorsselaer A."/>
            <person name="Carapito C."/>
        </authorList>
    </citation>
    <scope>IDENTIFICATION BY MASS SPECTROMETRY [LARGE SCALE ANALYSIS]</scope>
</reference>
<reference key="21">
    <citation type="journal article" date="2017" name="Nat. Struct. Mol. Biol.">
        <title>Site-specific mapping of the human SUMO proteome reveals co-modification with phosphorylation.</title>
        <authorList>
            <person name="Hendriks I.A."/>
            <person name="Lyon D."/>
            <person name="Young C."/>
            <person name="Jensen L.J."/>
            <person name="Vertegaal A.C."/>
            <person name="Nielsen M.L."/>
        </authorList>
    </citation>
    <scope>SUMOYLATION [LARGE SCALE ANALYSIS] AT LYS-77; LYS-81; LYS-195; LYS-255 AND LYS-489</scope>
    <scope>IDENTIFICATION BY MASS SPECTROMETRY [LARGE SCALE ANALYSIS]</scope>
</reference>
<reference key="22">
    <citation type="journal article" date="2015" name="Nat. Struct. Mol. Biol.">
        <title>The active site of O-GlcNAc transferase imposes constraints on substrate sequence.</title>
        <authorList>
            <person name="Pathak S."/>
            <person name="Alonso J."/>
            <person name="Schimpl M."/>
            <person name="Rafie K."/>
            <person name="Blair D.E."/>
            <person name="Borodkin V.S."/>
            <person name="Albarbarawi O."/>
            <person name="van Aalten D.M.F."/>
        </authorList>
    </citation>
    <scope>GLYCOSYLATION AT THR-413</scope>
</reference>
<reference key="23">
    <citation type="journal article" date="2021" name="Genet. Med.">
        <title>Heterozygous lamin B1 and lamin B2 variants cause primary microcephaly and define a novel laminopathy.</title>
        <authorList>
            <consortium name="Genomics England Research Consortium"/>
            <person name="Parry D.A."/>
            <person name="Martin C.A."/>
            <person name="Greene P."/>
            <person name="Marsh J.A."/>
            <person name="Blyth M."/>
            <person name="Cox H."/>
            <person name="Donnelly D."/>
            <person name="Greenhalgh L."/>
            <person name="Greville-Heygate S."/>
            <person name="Harrison V."/>
            <person name="Lachlan K."/>
            <person name="McKenna C."/>
            <person name="Quigley A.J."/>
            <person name="Rea G."/>
            <person name="Robertson L."/>
            <person name="Suri M."/>
            <person name="Jackson A.P."/>
        </authorList>
    </citation>
    <scope>INVOLVEMENT IN MCPH27</scope>
    <scope>VARIANTS MCPH27 HIS-54 AND LYS-398</scope>
    <scope>CHARACTERIZATION OF VARIANTS MCPH27 HIS-54 AND LYS-398</scope>
    <scope>FUNCTION</scope>
    <scope>SUBCELLULAR LOCATION</scope>
</reference>
<reference key="24">
    <citation type="journal article" date="2006" name="Am. J. Hum. Genet.">
        <title>Sequencing of the reannotated LMNB2 gene reveals novel mutations in patients with acquired partial lipodystrophy.</title>
        <authorList>
            <person name="Hegele R.A."/>
            <person name="Cao H."/>
            <person name="Liu D.M."/>
            <person name="Costain G.A."/>
            <person name="Charlton-Menys V."/>
            <person name="Rodger N.W."/>
            <person name="Durrington P.N."/>
        </authorList>
    </citation>
    <scope>VARIANT APLD THR-427</scope>
    <scope>VARIANT GLN-235</scope>
</reference>
<reference key="25">
    <citation type="journal article" date="2006" name="Science">
        <title>The consensus coding sequences of human breast and colorectal cancers.</title>
        <authorList>
            <person name="Sjoeblom T."/>
            <person name="Jones S."/>
            <person name="Wood L.D."/>
            <person name="Parsons D.W."/>
            <person name="Lin J."/>
            <person name="Barber T.D."/>
            <person name="Mandelker D."/>
            <person name="Leary R.J."/>
            <person name="Ptak J."/>
            <person name="Silliman N."/>
            <person name="Szabo S."/>
            <person name="Buckhaults P."/>
            <person name="Farrell C."/>
            <person name="Meeh P."/>
            <person name="Markowitz S.D."/>
            <person name="Willis J."/>
            <person name="Dawson D."/>
            <person name="Willson J.K.V."/>
            <person name="Gazdar A.F."/>
            <person name="Hartigan J."/>
            <person name="Wu L."/>
            <person name="Liu C."/>
            <person name="Parmigiani G."/>
            <person name="Park B.H."/>
            <person name="Bachman K.E."/>
            <person name="Papadopoulos N."/>
            <person name="Vogelstein B."/>
            <person name="Kinzler K.W."/>
            <person name="Velculescu V.E."/>
        </authorList>
    </citation>
    <scope>VARIANT [LARGE SCALE ANALYSIS] TRP-236</scope>
</reference>
<reference key="26">
    <citation type="journal article" date="2012" name="J. Pediatr. Endocrinol. Metab.">
        <title>A Chinese patient with acquired partial lipodystrophy caused by a novel mutation with LMNB2 gene.</title>
        <authorList>
            <person name="Gao J."/>
            <person name="Li Y."/>
            <person name="Fu X."/>
            <person name="Luo X."/>
        </authorList>
    </citation>
    <scope>VARIANT APLD HIS-252</scope>
</reference>
<reference key="27">
    <citation type="journal article" date="2015" name="Hum. Mol. Genet.">
        <title>Mutation of the nuclear lamin gene LMNB2 in progressive myoclonus epilepsy with early ataxia.</title>
        <authorList>
            <person name="Damiano J.A."/>
            <person name="Afawi Z."/>
            <person name="Bahlo M."/>
            <person name="Mauermann M."/>
            <person name="Misk A."/>
            <person name="Arsov T."/>
            <person name="Oliver K.L."/>
            <person name="Dahl H.H."/>
            <person name="Shearer A.E."/>
            <person name="Smith R.J."/>
            <person name="Hall N.E."/>
            <person name="Mahmood K."/>
            <person name="Leventer R.J."/>
            <person name="Scheffer I.E."/>
            <person name="Muona M."/>
            <person name="Lehesjoki A.E."/>
            <person name="Korczyn A.D."/>
            <person name="Herrmann H."/>
            <person name="Berkovic S.F."/>
            <person name="Hildebrand M.S."/>
        </authorList>
    </citation>
    <scope>VARIANT EPM9 TYR-157</scope>
    <scope>CHARACTERIZATION OF VARIANT EPM9 TYR-157</scope>
</reference>
<reference key="28">
    <citation type="journal article" date="2016" name="Nature">
        <title>Analysis of protein-coding genetic variation in 60,706 humans.</title>
        <authorList>
            <consortium name="Exome Aggregation Consortium"/>
            <person name="Lek M."/>
            <person name="Karczewski K.J."/>
            <person name="Minikel E.V."/>
            <person name="Samocha K.E."/>
            <person name="Banks E."/>
            <person name="Fennell T."/>
            <person name="O'Donnell-Luria A.H."/>
            <person name="Ware J.S."/>
            <person name="Hill A.J."/>
            <person name="Cummings B.B."/>
            <person name="Tukiainen T."/>
            <person name="Birnbaum D.P."/>
            <person name="Kosmicki J.A."/>
            <person name="Duncan L.E."/>
            <person name="Estrada K."/>
            <person name="Zhao F."/>
            <person name="Zou J."/>
            <person name="Pierce-Hoffman E."/>
            <person name="Berghout J."/>
            <person name="Cooper D.N."/>
            <person name="Deflaux N."/>
            <person name="DePristo M."/>
            <person name="Do R."/>
            <person name="Flannick J."/>
            <person name="Fromer M."/>
            <person name="Gauthier L."/>
            <person name="Goldstein J."/>
            <person name="Gupta N."/>
            <person name="Howrigan D."/>
            <person name="Kiezun A."/>
            <person name="Kurki M.I."/>
            <person name="Moonshine A.L."/>
            <person name="Natarajan P."/>
            <person name="Orozco L."/>
            <person name="Peloso G.M."/>
            <person name="Poplin R."/>
            <person name="Rivas M.A."/>
            <person name="Ruano-Rubio V."/>
            <person name="Rose S.A."/>
            <person name="Ruderfer D.M."/>
            <person name="Shakir K."/>
            <person name="Stenson P.D."/>
            <person name="Stevens C."/>
            <person name="Thomas B.P."/>
            <person name="Tiao G."/>
            <person name="Tusie-Luna M.T."/>
            <person name="Weisburd B."/>
            <person name="Won H.H."/>
            <person name="Yu D."/>
            <person name="Altshuler D.M."/>
            <person name="Ardissino D."/>
            <person name="Boehnke M."/>
            <person name="Danesh J."/>
            <person name="Donnelly S."/>
            <person name="Elosua R."/>
            <person name="Florez J.C."/>
            <person name="Gabriel S.B."/>
            <person name="Getz G."/>
            <person name="Glatt S.J."/>
            <person name="Hultman C.M."/>
            <person name="Kathiresan S."/>
            <person name="Laakso M."/>
            <person name="McCarroll S."/>
            <person name="McCarthy M.I."/>
            <person name="McGovern D."/>
            <person name="McPherson R."/>
            <person name="Neale B.M."/>
            <person name="Palotie A."/>
            <person name="Purcell S.M."/>
            <person name="Saleheen D."/>
            <person name="Scharf J.M."/>
            <person name="Sklar P."/>
            <person name="Sullivan P.F."/>
            <person name="Tuomilehto J."/>
            <person name="Tsuang M.T."/>
            <person name="Watkins H.C."/>
            <person name="Wilson J.G."/>
            <person name="Daly M.J."/>
            <person name="MacArthur D.G."/>
        </authorList>
    </citation>
    <scope>VARIANT GLN-235</scope>
</reference>
<evidence type="ECO:0000250" key="1">
    <source>
        <dbReference type="UniProtKB" id="P02545"/>
    </source>
</evidence>
<evidence type="ECO:0000250" key="2">
    <source>
        <dbReference type="UniProtKB" id="P20700"/>
    </source>
</evidence>
<evidence type="ECO:0000250" key="3">
    <source>
        <dbReference type="UniProtKB" id="P21619"/>
    </source>
</evidence>
<evidence type="ECO:0000255" key="4"/>
<evidence type="ECO:0000255" key="5">
    <source>
        <dbReference type="PROSITE-ProRule" id="PRU01187"/>
    </source>
</evidence>
<evidence type="ECO:0000255" key="6">
    <source>
        <dbReference type="PROSITE-ProRule" id="PRU01188"/>
    </source>
</evidence>
<evidence type="ECO:0000256" key="7">
    <source>
        <dbReference type="SAM" id="MobiDB-lite"/>
    </source>
</evidence>
<evidence type="ECO:0000269" key="8">
    <source>
    </source>
</evidence>
<evidence type="ECO:0000269" key="9">
    <source>
    </source>
</evidence>
<evidence type="ECO:0000269" key="10">
    <source>
    </source>
</evidence>
<evidence type="ECO:0000269" key="11">
    <source>
    </source>
</evidence>
<evidence type="ECO:0000269" key="12">
    <source>
    </source>
</evidence>
<evidence type="ECO:0000269" key="13">
    <source>
    </source>
</evidence>
<evidence type="ECO:0000269" key="14">
    <source>
    </source>
</evidence>
<evidence type="ECO:0000305" key="15"/>
<evidence type="ECO:0000305" key="16">
    <source>
    </source>
</evidence>
<evidence type="ECO:0007744" key="17">
    <source>
    </source>
</evidence>
<evidence type="ECO:0007744" key="18">
    <source>
    </source>
</evidence>
<evidence type="ECO:0007744" key="19">
    <source>
    </source>
</evidence>
<evidence type="ECO:0007744" key="20">
    <source>
    </source>
</evidence>
<evidence type="ECO:0007744" key="21">
    <source>
    </source>
</evidence>
<evidence type="ECO:0007744" key="22">
    <source>
    </source>
</evidence>
<evidence type="ECO:0007744" key="23">
    <source>
    </source>
</evidence>
<evidence type="ECO:0007744" key="24">
    <source>
    </source>
</evidence>
<evidence type="ECO:0007744" key="25">
    <source>
    </source>
</evidence>
<evidence type="ECO:0007744" key="26">
    <source>
    </source>
</evidence>
<evidence type="ECO:0007829" key="27">
    <source>
        <dbReference type="PDB" id="2LLL"/>
    </source>
</evidence>
<protein>
    <recommendedName>
        <fullName>Lamin-B2</fullName>
    </recommendedName>
</protein>
<name>LMNB2_HUMAN</name>
<gene>
    <name type="primary">LMNB2</name>
    <name type="synonym">LMN2</name>
</gene>
<proteinExistence type="evidence at protein level"/>
<accession>Q03252</accession>
<accession>O75292</accession>
<accession>Q14734</accession>
<accession>Q96DF6</accession>
<sequence length="620" mass="69948">MSPPSPGRRREQRRPRAAATMATPLPGRAGGPATPLSPTRLSRLQEKEELRELNDRLAHYIDRVRALELENDRLLLKISEKEEVTTREVSGIKALYESELADARRVLDETARERARLQIEIGKLRAELDEVNKSAKKREGELTVAQGRVKDLESLFHRSEVELAAALSDKRGLESDVAELRAQLAKAEDGHAVAKKQLEKETLMRVDLENRCQSLQEELDFRKSVFEEEVRETRRRHERRLVEVDSSRQQEYDFKMAQALEELRSQHDEQVRLYKLELEQTYQAKLDSAKLSSDQNDKAASAAREELKEARMRLESLSYQLSGLQKQASAAEDRIRELEEAMAGERDKFRKMLDAKEQEMTEMRDVMQQQLAEYQELLDVKLALDMEINAYRKLLEGEEERLKLSPSPSSRVTVSRATSSSSGSLSATGRLGRSKRKRLEVEEPLGSGPSVLGTGTGGSGGFHLAQQASASGSVSIEEIDLEGKFVQLKNNSDKDQSLGNWRIKRQVLEGEEIAYKFTPKYILRAGQMVTVWAAGAGVAHSPPSTLVWKGQSSWGTGESFRTVLVNADGEEVAMRTVKKSSVMRENENGEEEEEEAEFGEEDLFHQQGDPRTTSRGCYVM</sequence>
<organism>
    <name type="scientific">Homo sapiens</name>
    <name type="common">Human</name>
    <dbReference type="NCBI Taxonomy" id="9606"/>
    <lineage>
        <taxon>Eukaryota</taxon>
        <taxon>Metazoa</taxon>
        <taxon>Chordata</taxon>
        <taxon>Craniata</taxon>
        <taxon>Vertebrata</taxon>
        <taxon>Euteleostomi</taxon>
        <taxon>Mammalia</taxon>
        <taxon>Eutheria</taxon>
        <taxon>Euarchontoglires</taxon>
        <taxon>Primates</taxon>
        <taxon>Haplorrhini</taxon>
        <taxon>Catarrhini</taxon>
        <taxon>Hominidae</taxon>
        <taxon>Homo</taxon>
    </lineage>
</organism>
<feature type="chain" id="PRO_0000063820" description="Lamin-B2">
    <location>
        <begin position="1"/>
        <end position="617"/>
    </location>
</feature>
<feature type="propeptide" id="PRO_0000403470" description="Removed in mature form" evidence="2">
    <location>
        <begin position="618"/>
        <end position="620"/>
    </location>
</feature>
<feature type="domain" description="IF rod" evidence="6">
    <location>
        <begin position="46"/>
        <end position="402"/>
    </location>
</feature>
<feature type="domain" description="LTD" evidence="5">
    <location>
        <begin position="462"/>
        <end position="579"/>
    </location>
</feature>
<feature type="region of interest" description="Head">
    <location>
        <begin position="1"/>
        <end position="48"/>
    </location>
</feature>
<feature type="region of interest" description="Disordered" evidence="7">
    <location>
        <begin position="1"/>
        <end position="38"/>
    </location>
</feature>
<feature type="region of interest" description="Coil 1A">
    <location>
        <begin position="49"/>
        <end position="83"/>
    </location>
</feature>
<feature type="region of interest" description="Linker 1">
    <location>
        <begin position="84"/>
        <end position="95"/>
    </location>
</feature>
<feature type="region of interest" description="Coil 1B">
    <location>
        <begin position="96"/>
        <end position="229"/>
    </location>
</feature>
<feature type="region of interest" description="Linker 2">
    <location>
        <begin position="230"/>
        <end position="256"/>
    </location>
</feature>
<feature type="region of interest" description="Coil 2">
    <location>
        <begin position="257"/>
        <end position="400"/>
    </location>
</feature>
<feature type="region of interest" description="Disordered" evidence="7">
    <location>
        <begin position="399"/>
        <end position="464"/>
    </location>
</feature>
<feature type="region of interest" description="Tail">
    <location>
        <begin position="401"/>
        <end position="620"/>
    </location>
</feature>
<feature type="region of interest" description="Disordered" evidence="7">
    <location>
        <begin position="581"/>
        <end position="620"/>
    </location>
</feature>
<feature type="short sequence motif" description="Nuclear localization signal" evidence="4">
    <location>
        <begin position="435"/>
        <end position="440"/>
    </location>
</feature>
<feature type="compositionally biased region" description="Low complexity" evidence="7">
    <location>
        <begin position="404"/>
        <end position="431"/>
    </location>
</feature>
<feature type="compositionally biased region" description="Low complexity" evidence="7">
    <location>
        <begin position="444"/>
        <end position="453"/>
    </location>
</feature>
<feature type="compositionally biased region" description="Acidic residues" evidence="7">
    <location>
        <begin position="588"/>
        <end position="601"/>
    </location>
</feature>
<feature type="compositionally biased region" description="Polar residues" evidence="7">
    <location>
        <begin position="609"/>
        <end position="620"/>
    </location>
</feature>
<feature type="modified residue" description="Phosphothreonine" evidence="23">
    <location>
        <position position="23"/>
    </location>
</feature>
<feature type="modified residue" description="Phosphothreonine" evidence="17 18 20 21 23 24">
    <location>
        <position position="34"/>
    </location>
</feature>
<feature type="modified residue" description="Phosphoserine" evidence="18 23">
    <location>
        <position position="37"/>
    </location>
</feature>
<feature type="modified residue" description="N6-acetyllysine; alternate" evidence="19">
    <location>
        <position position="81"/>
    </location>
</feature>
<feature type="modified residue" description="Phosphoserine" evidence="23">
    <location>
        <position position="316"/>
    </location>
</feature>
<feature type="modified residue" description="Phosphoserine" evidence="1">
    <location>
        <position position="407"/>
    </location>
</feature>
<feature type="modified residue" description="Phosphoserine" evidence="22">
    <location>
        <position position="420"/>
    </location>
</feature>
<feature type="modified residue" description="Phosphoserine" evidence="18 22">
    <location>
        <position position="422"/>
    </location>
</feature>
<feature type="modified residue" description="Phosphoserine" evidence="18 22">
    <location>
        <position position="424"/>
    </location>
</feature>
<feature type="modified residue" description="Phosphoserine" evidence="18 22">
    <location>
        <position position="426"/>
    </location>
</feature>
<feature type="modified residue" description="Omega-N-methylarginine" evidence="3">
    <location>
        <position position="433"/>
    </location>
</feature>
<feature type="modified residue" description="Phosphoserine" evidence="23">
    <location>
        <position position="497"/>
    </location>
</feature>
<feature type="modified residue" description="Cysteine methyl ester" evidence="2">
    <location>
        <position position="617"/>
    </location>
</feature>
<feature type="lipid moiety-binding region" description="S-farnesyl cysteine" evidence="2">
    <location>
        <position position="617"/>
    </location>
</feature>
<feature type="glycosylation site" description="O-linked (GlcNAc) threonine" evidence="12">
    <location>
        <position position="413"/>
    </location>
</feature>
<feature type="cross-link" description="Glycyl lysine isopeptide (Lys-Gly) (interchain with G-Cter in SUMO2)" evidence="25 26">
    <location>
        <position position="77"/>
    </location>
</feature>
<feature type="cross-link" description="Glycyl lysine isopeptide (Lys-Gly) (interchain with G-Cter in SUMO2); alternate" evidence="25 26">
    <location>
        <position position="81"/>
    </location>
</feature>
<feature type="cross-link" description="Glycyl lysine isopeptide (Lys-Gly) (interchain with G-Cter in SUMO2)" evidence="25 26">
    <location>
        <position position="195"/>
    </location>
</feature>
<feature type="cross-link" description="Glycyl lysine isopeptide (Lys-Gly) (interchain with G-Cter in SUMO2)" evidence="26">
    <location>
        <position position="255"/>
    </location>
</feature>
<feature type="cross-link" description="Glycyl lysine isopeptide (Lys-Gly) (interchain with G-Cter in SUMO2)" evidence="26">
    <location>
        <position position="489"/>
    </location>
</feature>
<feature type="sequence variant" id="VAR_085504" description="In MCPH27; increased aggregation; changed nuclear envelope organization; dbSNP:rs1972096108." evidence="14">
    <original>N</original>
    <variation>H</variation>
    <location>
        <position position="54"/>
    </location>
</feature>
<feature type="sequence variant" id="VAR_074170" description="In EPM9; disrupts fibrillar formation; dbSNP:rs797045143." evidence="11">
    <original>H</original>
    <variation>Y</variation>
    <location>
        <position position="157"/>
    </location>
</feature>
<feature type="sequence variant" id="VAR_031063" description="May be a risk factor for partial acquired lipodystrophy; dbSNP:rs121912497." evidence="8 13">
    <original>R</original>
    <variation>Q</variation>
    <location>
        <position position="235"/>
    </location>
</feature>
<feature type="sequence variant" id="VAR_036370" description="In a colorectal cancer sample; somatic mutation; dbSNP:rs774297966." evidence="9">
    <original>R</original>
    <variation>W</variation>
    <location>
        <position position="236"/>
    </location>
</feature>
<feature type="sequence variant" id="VAR_074171" description="In APLD." evidence="10">
    <original>Y</original>
    <variation>H</variation>
    <location>
        <position position="252"/>
    </location>
</feature>
<feature type="sequence variant" id="VAR_085505" description="In MCPH27; increased aggregation; changed nuclear envelope organization; dbSNP:rs1971791380." evidence="14">
    <original>E</original>
    <variation>K</variation>
    <location>
        <position position="398"/>
    </location>
</feature>
<feature type="sequence variant" id="VAR_031064" description="In APLD; dbSNP:rs57521499." evidence="8">
    <original>A</original>
    <variation>T</variation>
    <location>
        <position position="427"/>
    </location>
</feature>
<feature type="sequence conflict" description="In Ref. 5; AAA80979." evidence="15" ref="5">
    <original>R</original>
    <variation>S</variation>
    <location>
        <position position="401"/>
    </location>
</feature>
<feature type="sequence conflict" description="In Ref. 5; AAA80979." evidence="15" ref="5">
    <original>LEVEEPLGSGPSVLGTGTGGSGGFHLAQQASASGSVS</original>
    <variation>WRWRSPWQRPKRPGHGHGWQRWLPPGPAGLGLGQRH</variation>
    <location>
        <begin position="439"/>
        <end position="475"/>
    </location>
</feature>
<feature type="strand" evidence="27">
    <location>
        <begin position="473"/>
        <end position="479"/>
    </location>
</feature>
<feature type="strand" evidence="27">
    <location>
        <begin position="484"/>
        <end position="490"/>
    </location>
</feature>
<feature type="strand" evidence="27">
    <location>
        <begin position="492"/>
        <end position="494"/>
    </location>
</feature>
<feature type="strand" evidence="27">
    <location>
        <begin position="502"/>
        <end position="507"/>
    </location>
</feature>
<feature type="strand" evidence="27">
    <location>
        <begin position="512"/>
        <end position="516"/>
    </location>
</feature>
<feature type="strand" evidence="27">
    <location>
        <begin position="528"/>
        <end position="533"/>
    </location>
</feature>
<feature type="helix" evidence="27">
    <location>
        <begin position="534"/>
        <end position="536"/>
    </location>
</feature>
<feature type="turn" evidence="27">
    <location>
        <begin position="542"/>
        <end position="544"/>
    </location>
</feature>
<feature type="strand" evidence="27">
    <location>
        <begin position="545"/>
        <end position="548"/>
    </location>
</feature>
<feature type="strand" evidence="27">
    <location>
        <begin position="552"/>
        <end position="555"/>
    </location>
</feature>
<feature type="strand" evidence="27">
    <location>
        <begin position="558"/>
        <end position="565"/>
    </location>
</feature>
<feature type="strand" evidence="27">
    <location>
        <begin position="571"/>
        <end position="580"/>
    </location>
</feature>
<keyword id="KW-0002">3D-structure</keyword>
<keyword id="KW-0007">Acetylation</keyword>
<keyword id="KW-0175">Coiled coil</keyword>
<keyword id="KW-0903">Direct protein sequencing</keyword>
<keyword id="KW-0225">Disease variant</keyword>
<keyword id="KW-0887">Epilepsy</keyword>
<keyword id="KW-0325">Glycoprotein</keyword>
<keyword id="KW-0991">Intellectual disability</keyword>
<keyword id="KW-0403">Intermediate filament</keyword>
<keyword id="KW-1017">Isopeptide bond</keyword>
<keyword id="KW-0449">Lipoprotein</keyword>
<keyword id="KW-0488">Methylation</keyword>
<keyword id="KW-0523">Neurodegeneration</keyword>
<keyword id="KW-0539">Nucleus</keyword>
<keyword id="KW-0597">Phosphoprotein</keyword>
<keyword id="KW-0636">Prenylation</keyword>
<keyword id="KW-0905">Primary microcephaly</keyword>
<keyword id="KW-1267">Proteomics identification</keyword>
<keyword id="KW-1185">Reference proteome</keyword>
<keyword id="KW-0832">Ubl conjugation</keyword>
<comment type="function">
    <text evidence="14">Lamins are intermediate filament proteins that assemble into a filamentous meshwork, and which constitute the major components of the nuclear lamina, a fibrous layer on the nucleoplasmic side of the inner nuclear membrane (PubMed:33033404). Lamins provide a framework for the nuclear envelope, bridging the nuclear envelope and chromatin, thereby playing an important role in nuclear assembly, chromatin organization, nuclear membrane and telomere dynamics (PubMed:33033404). The structural integrity of the lamina is strictly controlled by the cell cycle, as seen by the disintegration and formation of the nuclear envelope in prophase and telophase, respectively (PubMed:33033404).</text>
</comment>
<comment type="subunit">
    <text evidence="3">Dimer (By similarity). Lamin dimers then assemble into dimeric head-to-tail polymers (By similarity). Ultimately, two head-to-tail polymers assemble laterally into a protofilament with a uniformly shaped rod of 3.5 nm in diameter (By similarity). Interacts with TMEM43 (By similarity).</text>
</comment>
<comment type="interaction">
    <interactant intactId="EBI-2830427">
        <id>Q03252</id>
    </interactant>
    <interactant intactId="EBI-17286414">
        <id>A2BDD9</id>
        <label>AMOT</label>
    </interactant>
    <organismsDiffer>false</organismsDiffer>
    <experiments>3</experiments>
</comment>
<comment type="interaction">
    <interactant intactId="EBI-2830427">
        <id>Q03252</id>
    </interactant>
    <interactant intactId="EBI-746752">
        <id>Q9Y2J4</id>
        <label>AMOTL2</label>
    </interactant>
    <organismsDiffer>false</organismsDiffer>
    <experiments>3</experiments>
</comment>
<comment type="interaction">
    <interactant intactId="EBI-2830427">
        <id>Q03252</id>
    </interactant>
    <interactant intactId="EBI-718700">
        <id>P35219</id>
        <label>CA8</label>
    </interactant>
    <organismsDiffer>false</organismsDiffer>
    <experiments>3</experiments>
</comment>
<comment type="interaction">
    <interactant intactId="EBI-2830427">
        <id>Q03252</id>
    </interactant>
    <interactant intactId="EBI-744556">
        <id>Q96HB5</id>
        <label>CCDC120</label>
    </interactant>
    <organismsDiffer>false</organismsDiffer>
    <experiments>3</experiments>
</comment>
<comment type="interaction">
    <interactant intactId="EBI-2830427">
        <id>Q03252</id>
    </interactant>
    <interactant intactId="EBI-347573">
        <id>A6NC98</id>
        <label>CCDC88B</label>
    </interactant>
    <organismsDiffer>false</organismsDiffer>
    <experiments>3</experiments>
</comment>
<comment type="interaction">
    <interactant intactId="EBI-2830427">
        <id>Q03252</id>
    </interactant>
    <interactant intactId="EBI-295634">
        <id>Q16543</id>
        <label>CDC37</label>
    </interactant>
    <organismsDiffer>false</organismsDiffer>
    <experiments>3</experiments>
</comment>
<comment type="interaction">
    <interactant intactId="EBI-2830427">
        <id>Q03252</id>
    </interactant>
    <interactant intactId="EBI-2349927">
        <id>Q5JST6</id>
        <label>EFHC2</label>
    </interactant>
    <organismsDiffer>false</organismsDiffer>
    <experiments>3</experiments>
</comment>
<comment type="interaction">
    <interactant intactId="EBI-2830427">
        <id>Q03252</id>
    </interactant>
    <interactant intactId="EBI-1050358">
        <id>P07954</id>
        <label>FH</label>
    </interactant>
    <organismsDiffer>false</organismsDiffer>
    <experiments>3</experiments>
</comment>
<comment type="interaction">
    <interactant intactId="EBI-2830427">
        <id>Q03252</id>
    </interactant>
    <interactant intactId="EBI-618309">
        <id>Q08379</id>
        <label>GOLGA2</label>
    </interactant>
    <organismsDiffer>false</organismsDiffer>
    <experiments>3</experiments>
</comment>
<comment type="interaction">
    <interactant intactId="EBI-2830427">
        <id>Q03252</id>
    </interactant>
    <interactant intactId="EBI-351935">
        <id>P02545</id>
        <label>LMNA</label>
    </interactant>
    <organismsDiffer>false</organismsDiffer>
    <experiments>10</experiments>
</comment>
<comment type="interaction">
    <interactant intactId="EBI-2830427">
        <id>Q03252</id>
    </interactant>
    <interactant intactId="EBI-968218">
        <id>P20700</id>
        <label>LMNB1</label>
    </interactant>
    <organismsDiffer>false</organismsDiffer>
    <experiments>8</experiments>
</comment>
<comment type="interaction">
    <interactant intactId="EBI-2830427">
        <id>Q03252</id>
    </interactant>
    <interactant intactId="EBI-2830427">
        <id>Q03252</id>
        <label>LMNB2</label>
    </interactant>
    <organismsDiffer>false</organismsDiffer>
    <experiments>3</experiments>
</comment>
<comment type="interaction">
    <interactant intactId="EBI-2830427">
        <id>Q03252</id>
    </interactant>
    <interactant intactId="EBI-1216080">
        <id>Q9Y250</id>
        <label>LZTS1</label>
    </interactant>
    <organismsDiffer>false</organismsDiffer>
    <experiments>3</experiments>
</comment>
<comment type="interaction">
    <interactant intactId="EBI-2830427">
        <id>Q03252</id>
    </interactant>
    <interactant intactId="EBI-1048159">
        <id>P55081</id>
        <label>MFAP1</label>
    </interactant>
    <organismsDiffer>false</organismsDiffer>
    <experiments>3</experiments>
</comment>
<comment type="interaction">
    <interactant intactId="EBI-2830427">
        <id>Q03252</id>
    </interactant>
    <interactant intactId="EBI-10172526">
        <id>Q9UJV3-2</id>
        <label>MID2</label>
    </interactant>
    <organismsDiffer>false</organismsDiffer>
    <experiments>3</experiments>
</comment>
<comment type="interaction">
    <interactant intactId="EBI-2830427">
        <id>Q03252</id>
    </interactant>
    <interactant intactId="EBI-3917713">
        <id>O14753</id>
        <label>OVOL1</label>
    </interactant>
    <organismsDiffer>false</organismsDiffer>
    <experiments>3</experiments>
</comment>
<comment type="interaction">
    <interactant intactId="EBI-2830427">
        <id>Q03252</id>
    </interactant>
    <interactant intactId="EBI-14066006">
        <id>Q4G0R1</id>
        <label>PIBF1</label>
    </interactant>
    <organismsDiffer>false</organismsDiffer>
    <experiments>3</experiments>
</comment>
<comment type="interaction">
    <interactant intactId="EBI-2830427">
        <id>Q03252</id>
    </interactant>
    <interactant intactId="EBI-12029004">
        <id>P78424</id>
        <label>POU6F2</label>
    </interactant>
    <organismsDiffer>false</organismsDiffer>
    <experiments>3</experiments>
</comment>
<comment type="interaction">
    <interactant intactId="EBI-2830427">
        <id>Q03252</id>
    </interactant>
    <interactant intactId="EBI-1105153">
        <id>Q96KQ4</id>
        <label>PPP1R13B</label>
    </interactant>
    <organismsDiffer>false</organismsDiffer>
    <experiments>3</experiments>
</comment>
<comment type="interaction">
    <interactant intactId="EBI-2830427">
        <id>Q03252</id>
    </interactant>
    <interactant intactId="EBI-1105213">
        <id>Q9UBB9</id>
        <label>TFIP11</label>
    </interactant>
    <organismsDiffer>false</organismsDiffer>
    <experiments>3</experiments>
</comment>
<comment type="interaction">
    <interactant intactId="EBI-2830427">
        <id>Q03252</id>
    </interactant>
    <interactant intactId="EBI-741515">
        <id>Q9NVV9</id>
        <label>THAP1</label>
    </interactant>
    <organismsDiffer>false</organismsDiffer>
    <experiments>3</experiments>
</comment>
<comment type="interaction">
    <interactant intactId="EBI-2830427">
        <id>Q03252</id>
    </interactant>
    <interactant intactId="EBI-11952721">
        <id>Q05BL1</id>
        <label>TP53BP2</label>
    </interactant>
    <organismsDiffer>false</organismsDiffer>
    <experiments>3</experiments>
</comment>
<comment type="interaction">
    <interactant intactId="EBI-2830427">
        <id>Q03252</id>
    </interactant>
    <interactant intactId="EBI-719493">
        <id>P14373</id>
        <label>TRIM27</label>
    </interactant>
    <organismsDiffer>false</organismsDiffer>
    <experiments>3</experiments>
</comment>
<comment type="interaction">
    <interactant intactId="EBI-2830427">
        <id>Q03252</id>
    </interactant>
    <interactant intactId="EBI-10241197">
        <id>Q3SY00</id>
        <label>TSGA10IP</label>
    </interactant>
    <organismsDiffer>false</organismsDiffer>
    <experiments>3</experiments>
</comment>
<comment type="interaction">
    <interactant intactId="EBI-2830427">
        <id>Q03252</id>
    </interactant>
    <interactant intactId="EBI-743272">
        <id>O75604</id>
        <label>USP2</label>
    </interactant>
    <organismsDiffer>false</organismsDiffer>
    <experiments>3</experiments>
</comment>
<comment type="interaction">
    <interactant intactId="EBI-2830427">
        <id>Q03252</id>
    </interactant>
    <interactant intactId="EBI-712969">
        <id>Q9Y3C0</id>
        <label>WASHC3</label>
    </interactant>
    <organismsDiffer>false</organismsDiffer>
    <experiments>3</experiments>
</comment>
<comment type="interaction">
    <interactant intactId="EBI-2830427">
        <id>Q03252</id>
    </interactant>
    <interactant intactId="EBI-14104088">
        <id>Q53FD0-2</id>
        <label>ZC2HC1C</label>
    </interactant>
    <organismsDiffer>false</organismsDiffer>
    <experiments>3</experiments>
</comment>
<comment type="interaction">
    <interactant intactId="EBI-2830427">
        <id>Q03252</id>
    </interactant>
    <interactant intactId="EBI-10237226">
        <id>Q15911-2</id>
        <label>ZFHX3</label>
    </interactant>
    <organismsDiffer>false</organismsDiffer>
    <experiments>3</experiments>
</comment>
<comment type="subcellular location">
    <subcellularLocation>
        <location evidence="16">Nucleus lamina</location>
    </subcellularLocation>
</comment>
<comment type="PTM">
    <text evidence="2">B-type lamins undergo a series of modifications, such as farnesylation and phosphorylation. Increased phosphorylation of the lamins occurs before envelope disintegration and probably plays a role in regulating lamin associations.</text>
</comment>
<comment type="PTM">
    <text evidence="1">Phosphorylation plays a key role in lamin organization, subcellular localization and nuclear envelope disintegration. Phosphorylation by CDK1 at Ser-37 and Ser-407 at the onset of mitosis drives lamin disassembly and nuclear envelope breakdown.</text>
</comment>
<comment type="disease" evidence="8 10">
    <disease id="DI-02142">
        <name>Partial acquired lipodystrophy</name>
        <acronym>APLD</acronym>
        <description>A rare childhood disease characterized by loss of subcutaneous fat from the face and trunk. Fat deposition on the pelvic girdle and lower limbs is normal or excessive. Most frequently, onset between 5 and 15 years of age. Most affected subjects are females and some show no other abnormality, but many develop glomerulonephritis, diabetes mellitus, hyperlipidemia, and complement deficiency. Intellectual disability in some cases. APLD is a sporadic disorder of unknown etiology.</description>
        <dbReference type="MIM" id="608709"/>
    </disease>
    <text>The disease is caused by variants affecting the gene represented in this entry.</text>
</comment>
<comment type="disease" evidence="11">
    <disease id="DI-04510">
        <name>Epilepsy, progressive myoclonic 9</name>
        <acronym>EPM9</acronym>
        <description>A form of progressive myoclonic epilepsy, a clinically and genetically heterogeneous group of disorders defined by the combination of action and reflex myoclonus, other types of epileptic seizures, and progressive neurodegeneration and neurocognitive impairment. EPM9 is an autosomal recessive form characterized by myoclonus, tonic-clonic seizures, ataxia, and delayed psychomotor development.</description>
        <dbReference type="MIM" id="616540"/>
    </disease>
    <text>The disease may be caused by variants affecting the gene represented in this entry.</text>
</comment>
<comment type="disease" evidence="14">
    <disease id="DI-06045">
        <name>Microcephaly 27, primary, autosomal dominant</name>
        <acronym>MCPH27</acronym>
        <description>A form of microcephaly, a disease defined as a head circumference more than 3 standard deviations below the age, sex and ethnically matched mean. Brain weight is markedly reduced and the cerebral cortex is disproportionately small. MCPH27 is an autosomal dominant form apparent in early childhood and associated with global developmental delay, delayed walking, inability to walk, impaired intellectual development, and poor or absent speech. Brain imaging may show enlarged ventricles or gyral abnormalities in some patients.</description>
        <dbReference type="MIM" id="619180"/>
    </disease>
    <text>The disease is caused by variants affecting the gene represented in this entry.</text>
</comment>
<comment type="similarity">
    <text evidence="6">Belongs to the intermediate filament family.</text>
</comment>
<comment type="sequence caution" evidence="15">
    <conflict type="erroneous initiation">
        <sequence resource="EMBL-CDS" id="AAH06551"/>
    </conflict>
    <text>Truncated N-terminus.</text>
</comment>
<dbReference type="EMBL" id="BT007441">
    <property type="protein sequence ID" value="AAP36109.1"/>
    <property type="molecule type" value="mRNA"/>
</dbReference>
<dbReference type="EMBL" id="AC011522">
    <property type="status" value="NOT_ANNOTATED_CDS"/>
    <property type="molecule type" value="Genomic_DNA"/>
</dbReference>
<dbReference type="EMBL" id="AC005624">
    <property type="protein sequence ID" value="AAC34573.1"/>
    <property type="molecule type" value="Genomic_DNA"/>
</dbReference>
<dbReference type="EMBL" id="BC006551">
    <property type="protein sequence ID" value="AAH06551.1"/>
    <property type="status" value="ALT_INIT"/>
    <property type="molecule type" value="mRNA"/>
</dbReference>
<dbReference type="EMBL" id="M94362">
    <property type="protein sequence ID" value="AAA80979.1"/>
    <property type="molecule type" value="mRNA"/>
</dbReference>
<dbReference type="EMBL" id="M94363">
    <property type="protein sequence ID" value="AAB00873.1"/>
    <property type="status" value="ALT_SEQ"/>
    <property type="molecule type" value="Genomic_DNA"/>
</dbReference>
<dbReference type="CCDS" id="CCDS12090.2"/>
<dbReference type="RefSeq" id="NP_116126.3">
    <property type="nucleotide sequence ID" value="NM_032737.3"/>
</dbReference>
<dbReference type="PDB" id="2LLL">
    <property type="method" value="NMR"/>
    <property type="chains" value="A=469-589"/>
</dbReference>
<dbReference type="PDBsum" id="2LLL"/>
<dbReference type="BMRB" id="Q03252"/>
<dbReference type="SMR" id="Q03252"/>
<dbReference type="BioGRID" id="124281">
    <property type="interactions" value="248"/>
</dbReference>
<dbReference type="DIP" id="DIP-57724N"/>
<dbReference type="FunCoup" id="Q03252">
    <property type="interactions" value="1698"/>
</dbReference>
<dbReference type="IntAct" id="Q03252">
    <property type="interactions" value="105"/>
</dbReference>
<dbReference type="MINT" id="Q03252"/>
<dbReference type="STRING" id="9606.ENSP00000327054"/>
<dbReference type="ChEMBL" id="CHEMBL5465302"/>
<dbReference type="GlyGen" id="Q03252">
    <property type="glycosylation" value="4 sites, 1 O-linked glycan (3 sites)"/>
</dbReference>
<dbReference type="iPTMnet" id="Q03252"/>
<dbReference type="MetOSite" id="Q03252"/>
<dbReference type="PhosphoSitePlus" id="Q03252"/>
<dbReference type="SwissPalm" id="Q03252"/>
<dbReference type="BioMuta" id="LMNB2"/>
<dbReference type="DMDM" id="23503078"/>
<dbReference type="REPRODUCTION-2DPAGE" id="IPI00009771"/>
<dbReference type="jPOST" id="Q03252"/>
<dbReference type="MassIVE" id="Q03252"/>
<dbReference type="PaxDb" id="9606-ENSP00000327054"/>
<dbReference type="PeptideAtlas" id="Q03252"/>
<dbReference type="ProteomicsDB" id="58204"/>
<dbReference type="Pumba" id="Q03252"/>
<dbReference type="ABCD" id="Q03252">
    <property type="antibodies" value="3 sequenced antibodies"/>
</dbReference>
<dbReference type="Antibodypedia" id="10783">
    <property type="antibodies" value="361 antibodies from 38 providers"/>
</dbReference>
<dbReference type="DNASU" id="84823"/>
<dbReference type="Ensembl" id="ENST00000325327.4">
    <property type="protein sequence ID" value="ENSP00000327054.3"/>
    <property type="gene ID" value="ENSG00000176619.13"/>
</dbReference>
<dbReference type="GeneID" id="84823"/>
<dbReference type="KEGG" id="hsa:84823"/>
<dbReference type="MANE-Select" id="ENST00000325327.4">
    <property type="protein sequence ID" value="ENSP00000327054.3"/>
    <property type="RefSeq nucleotide sequence ID" value="NM_032737.4"/>
    <property type="RefSeq protein sequence ID" value="NP_116126.3"/>
</dbReference>
<dbReference type="AGR" id="HGNC:6638"/>
<dbReference type="CTD" id="84823"/>
<dbReference type="DisGeNET" id="84823"/>
<dbReference type="GeneCards" id="LMNB2"/>
<dbReference type="HGNC" id="HGNC:6638">
    <property type="gene designation" value="LMNB2"/>
</dbReference>
<dbReference type="HPA" id="ENSG00000176619">
    <property type="expression patterns" value="Low tissue specificity"/>
</dbReference>
<dbReference type="MalaCards" id="LMNB2"/>
<dbReference type="MIM" id="150341">
    <property type="type" value="gene"/>
</dbReference>
<dbReference type="MIM" id="608709">
    <property type="type" value="phenotype"/>
</dbReference>
<dbReference type="MIM" id="616540">
    <property type="type" value="phenotype"/>
</dbReference>
<dbReference type="MIM" id="619180">
    <property type="type" value="phenotype"/>
</dbReference>
<dbReference type="neXtProt" id="NX_Q03252"/>
<dbReference type="OpenTargets" id="ENSG00000176619"/>
<dbReference type="Orphanet" id="79087">
    <property type="disease" value="Acquired partial lipodystrophy"/>
</dbReference>
<dbReference type="Orphanet" id="457265">
    <property type="disease" value="Progressive myoclonic epilepsy type 9"/>
</dbReference>
<dbReference type="PharmGKB" id="PA30404"/>
<dbReference type="VEuPathDB" id="HostDB:ENSG00000176619"/>
<dbReference type="eggNOG" id="KOG0977">
    <property type="taxonomic scope" value="Eukaryota"/>
</dbReference>
<dbReference type="GeneTree" id="ENSGT00940000160274"/>
<dbReference type="InParanoid" id="Q03252"/>
<dbReference type="OMA" id="EMTQMRD"/>
<dbReference type="OrthoDB" id="102442at2759"/>
<dbReference type="PAN-GO" id="Q03252">
    <property type="GO annotations" value="8 GO annotations based on evolutionary models"/>
</dbReference>
<dbReference type="PhylomeDB" id="Q03252"/>
<dbReference type="TreeFam" id="TF101181"/>
<dbReference type="PathwayCommons" id="Q03252"/>
<dbReference type="SignaLink" id="Q03252"/>
<dbReference type="BioGRID-ORCS" id="84823">
    <property type="hits" value="17 hits in 1159 CRISPR screens"/>
</dbReference>
<dbReference type="CD-CODE" id="1A18FFC4">
    <property type="entry name" value="Paraspeckle"/>
</dbReference>
<dbReference type="CD-CODE" id="232F8A39">
    <property type="entry name" value="P-body"/>
</dbReference>
<dbReference type="CD-CODE" id="FB4E32DD">
    <property type="entry name" value="Presynaptic clusters and postsynaptic densities"/>
</dbReference>
<dbReference type="ChiTaRS" id="LMNB2">
    <property type="organism name" value="human"/>
</dbReference>
<dbReference type="EvolutionaryTrace" id="Q03252"/>
<dbReference type="GenomeRNAi" id="84823"/>
<dbReference type="Pharos" id="Q03252">
    <property type="development level" value="Tbio"/>
</dbReference>
<dbReference type="PRO" id="PR:Q03252"/>
<dbReference type="Proteomes" id="UP000005640">
    <property type="component" value="Chromosome 19"/>
</dbReference>
<dbReference type="RNAct" id="Q03252">
    <property type="molecule type" value="protein"/>
</dbReference>
<dbReference type="Bgee" id="ENSG00000176619">
    <property type="expression patterns" value="Expressed in ventricular zone and 116 other cell types or tissues"/>
</dbReference>
<dbReference type="GO" id="GO:0005882">
    <property type="term" value="C:intermediate filament"/>
    <property type="evidence" value="ECO:0007669"/>
    <property type="project" value="UniProtKB-KW"/>
</dbReference>
<dbReference type="GO" id="GO:0005635">
    <property type="term" value="C:nuclear envelope"/>
    <property type="evidence" value="ECO:0000318"/>
    <property type="project" value="GO_Central"/>
</dbReference>
<dbReference type="GO" id="GO:0005652">
    <property type="term" value="C:nuclear lamina"/>
    <property type="evidence" value="ECO:0000318"/>
    <property type="project" value="GO_Central"/>
</dbReference>
<dbReference type="GO" id="GO:0031965">
    <property type="term" value="C:nuclear membrane"/>
    <property type="evidence" value="ECO:0000314"/>
    <property type="project" value="HPA"/>
</dbReference>
<dbReference type="GO" id="GO:0042802">
    <property type="term" value="F:identical protein binding"/>
    <property type="evidence" value="ECO:0000353"/>
    <property type="project" value="IntAct"/>
</dbReference>
<dbReference type="GO" id="GO:0005200">
    <property type="term" value="F:structural constituent of cytoskeleton"/>
    <property type="evidence" value="ECO:0000318"/>
    <property type="project" value="GO_Central"/>
</dbReference>
<dbReference type="GO" id="GO:0031507">
    <property type="term" value="P:heterochromatin formation"/>
    <property type="evidence" value="ECO:0000318"/>
    <property type="project" value="GO_Central"/>
</dbReference>
<dbReference type="GO" id="GO:0006998">
    <property type="term" value="P:nuclear envelope organization"/>
    <property type="evidence" value="ECO:0000318"/>
    <property type="project" value="GO_Central"/>
</dbReference>
<dbReference type="GO" id="GO:0007097">
    <property type="term" value="P:nuclear migration"/>
    <property type="evidence" value="ECO:0000318"/>
    <property type="project" value="GO_Central"/>
</dbReference>
<dbReference type="GO" id="GO:0051664">
    <property type="term" value="P:nuclear pore localization"/>
    <property type="evidence" value="ECO:0000318"/>
    <property type="project" value="GO_Central"/>
</dbReference>
<dbReference type="GO" id="GO:0090435">
    <property type="term" value="P:protein localization to nuclear envelope"/>
    <property type="evidence" value="ECO:0000318"/>
    <property type="project" value="GO_Central"/>
</dbReference>
<dbReference type="FunFam" id="2.60.40.1260:FF:000001">
    <property type="entry name" value="Lamin A/C"/>
    <property type="match status" value="1"/>
</dbReference>
<dbReference type="FunFam" id="1.20.5.170:FF:000076">
    <property type="entry name" value="Lamin B2"/>
    <property type="match status" value="1"/>
</dbReference>
<dbReference type="Gene3D" id="1.20.5.170">
    <property type="match status" value="1"/>
</dbReference>
<dbReference type="Gene3D" id="2.60.40.1260">
    <property type="entry name" value="Lamin Tail domain"/>
    <property type="match status" value="1"/>
</dbReference>
<dbReference type="Gene3D" id="1.20.5.1160">
    <property type="entry name" value="Vasodilator-stimulated phosphoprotein"/>
    <property type="match status" value="1"/>
</dbReference>
<dbReference type="InterPro" id="IPR018039">
    <property type="entry name" value="IF_conserved"/>
</dbReference>
<dbReference type="InterPro" id="IPR039008">
    <property type="entry name" value="IF_rod_dom"/>
</dbReference>
<dbReference type="InterPro" id="IPR001322">
    <property type="entry name" value="Lamin_tail_dom"/>
</dbReference>
<dbReference type="InterPro" id="IPR036415">
    <property type="entry name" value="Lamin_tail_dom_sf"/>
</dbReference>
<dbReference type="PANTHER" id="PTHR45721">
    <property type="entry name" value="LAMIN DM0-RELATED"/>
    <property type="match status" value="1"/>
</dbReference>
<dbReference type="PANTHER" id="PTHR45721:SF2">
    <property type="entry name" value="LAMIN-B2"/>
    <property type="match status" value="1"/>
</dbReference>
<dbReference type="Pfam" id="PF00038">
    <property type="entry name" value="Filament"/>
    <property type="match status" value="1"/>
</dbReference>
<dbReference type="Pfam" id="PF00932">
    <property type="entry name" value="LTD"/>
    <property type="match status" value="1"/>
</dbReference>
<dbReference type="SMART" id="SM01391">
    <property type="entry name" value="Filament"/>
    <property type="match status" value="1"/>
</dbReference>
<dbReference type="SUPFAM" id="SSF64593">
    <property type="entry name" value="Intermediate filament protein, coiled coil region"/>
    <property type="match status" value="2"/>
</dbReference>
<dbReference type="SUPFAM" id="SSF74853">
    <property type="entry name" value="Lamin A/C globular tail domain"/>
    <property type="match status" value="1"/>
</dbReference>
<dbReference type="PROSITE" id="PS00226">
    <property type="entry name" value="IF_ROD_1"/>
    <property type="match status" value="1"/>
</dbReference>
<dbReference type="PROSITE" id="PS51842">
    <property type="entry name" value="IF_ROD_2"/>
    <property type="match status" value="1"/>
</dbReference>
<dbReference type="PROSITE" id="PS51841">
    <property type="entry name" value="LTD"/>
    <property type="match status" value="1"/>
</dbReference>